<proteinExistence type="evidence at protein level"/>
<evidence type="ECO:0000269" key="1">
    <source>
    </source>
</evidence>
<evidence type="ECO:0000269" key="2">
    <source>
    </source>
</evidence>
<evidence type="ECO:0000269" key="3">
    <source>
    </source>
</evidence>
<evidence type="ECO:0000269" key="4">
    <source>
    </source>
</evidence>
<evidence type="ECO:0000303" key="5">
    <source>
    </source>
</evidence>
<evidence type="ECO:0000303" key="6">
    <source>
    </source>
</evidence>
<evidence type="ECO:0000303" key="7">
    <source>
    </source>
</evidence>
<evidence type="ECO:0000305" key="8"/>
<evidence type="ECO:0000305" key="9">
    <source>
    </source>
</evidence>
<evidence type="ECO:0000305" key="10">
    <source>
    </source>
</evidence>
<evidence type="ECO:0007829" key="11">
    <source>
        <dbReference type="PDB" id="5EPM"/>
    </source>
</evidence>
<comment type="function">
    <text evidence="1 2 3 4">Inhibits many voltage-gated sodium channels and one voltage-gated calcium channel (Cav2.2/CACNA1B (IC(50)=400 nM), Nav1.2/SCN2A (IC(50)=3-70 nM), Nav1.1/SCN1A (IC(50)=523-1060 nM), Nav1.7/SCN9A (IC(50)=129.1-5120 nM), Nav1.4/SCN4A (IC(50)=263-888 nM or &gt;10 uM) and Nav1.5/SCN5A (IC(50)=188-323 nM or &gt;10 uM)) (PubMed:16267209, PubMed:27129258, PubMed:28880874, PubMed:29703751). It acts by shifting the voltage dependence of channel activation to more depolarized potentials and by blocking the inward component of the sodium current (PubMed:16267209). It shows moderate affinity for lipid bilayers (PubMed:29703751). On Nav1.7/SCN9A, it has been shown to interact with the S3-S4 loop of domain DII (site 4) (PubMed:27129258). Is significantly more potent against Nav1.2/SCN2A than the other Nav channel subtypes (PubMed:16267209). In vivo, this toxin causes general ataxia, lack of response to stimuli, and semiparalysis (PubMed:16267209). After a few minutes, the mice are unable to stand, and breathing is reduced in rhythm and intensity (PubMed:16267209). Symptoms gradually increase with progressive slowing of breathing and flaccid paralysis, death occurred within 10 to 20 minutes post injection (PubMed:16267209). Animals remain totally flaccid, and no symptoms of excitatory neurotoxicity are observed (PubMed:16267209).</text>
</comment>
<comment type="subcellular location">
    <subcellularLocation>
        <location evidence="1">Secreted</location>
    </subcellularLocation>
</comment>
<comment type="tissue specificity">
    <text evidence="9">Expressed by the venom gland.</text>
</comment>
<comment type="domain">
    <text evidence="10">The presence of a 'disulfide through disulfide knot' structurally defines this protein as a knottin.</text>
</comment>
<comment type="mass spectrometry" mass="4041.79" method="MALDI" evidence="1"/>
<comment type="pharmaceutical">
    <text evidence="10">Derivatives such as D1Z/M5I/K18Y/R24Ka or D1Z/M5I/R27Na are under preclinical trial by Pfizer to treat pain.</text>
</comment>
<comment type="miscellaneous">
    <text evidence="2">Synthetic variant D1Z/M5I/K18Y/R24Ka has a N-terminal pyroglutamate and a C-terminal amidation. It shows an IC(50)=2.7 nM on Nav1.7/SCN9A and IC(50)&gt;3 uM on Nav1.4/SCN4A and Nav1.5/SCN5A.</text>
</comment>
<comment type="miscellaneous">
    <text evidence="2">Synthetic variant D1Z/M5I/R27Na has a N-terminal pyroglutamate and a C-terminal amidation. It shows an IC(50)=2.8 nM on Nav1.7/SCN9A and IC(50)&gt;3 uM on Nav1.4/SCN4A and Nav1.5/SCN5A.</text>
</comment>
<comment type="miscellaneous">
    <text evidence="1 3">Negative results: does not inhibit Cav1.3/CACNA1D and Cav3.1/CACNA1G (PubMed:28880874). Does not inhibit Nav1.3/SCN3A, Nav1.6/SCN8A, Nav1.8/SCN10A (PubMed:16267209, PubMed:28880874).</text>
</comment>
<comment type="similarity">
    <text evidence="8">Belongs to the neurotoxin 10 (Hwtx-1) family. 04 (CcoTx1) subfamily.</text>
</comment>
<reference key="1">
    <citation type="journal article" date="2006" name="Mol. Pharmacol.">
        <title>Four novel tarantula toxins as selective modulators of voltage-gated sodium channel subtypes.</title>
        <authorList>
            <person name="Bosmans F."/>
            <person name="Rash L."/>
            <person name="Zhu S."/>
            <person name="Diochot S."/>
            <person name="Lazdunski M."/>
            <person name="Escoubas P."/>
            <person name="Tytgat J."/>
        </authorList>
    </citation>
    <scope>PROTEIN SEQUENCE</scope>
    <scope>FUNCTION</scope>
    <scope>BIOASSAY</scope>
    <scope>SUBCELLULAR LOCATION</scope>
    <scope>MASS SPECTROMETRY</scope>
    <scope>AMIDATION AT LEU-33</scope>
    <source>
        <tissue>Venom</tissue>
    </source>
</reference>
<reference key="2">
    <citation type="journal article" date="2016" name="J. Biol. Chem.">
        <title>Engineering highly potent and selective microproteins against Nav1.7 sodium channel for treatment of pain.</title>
        <authorList>
            <person name="Shcherbatko A."/>
            <person name="Rossi A."/>
            <person name="Foletti D."/>
            <person name="Zhu G."/>
            <person name="Bogin O."/>
            <person name="Galindo Casas M."/>
            <person name="Rickert M."/>
            <person name="Hasa-Moreno A."/>
            <person name="Bartsevich V."/>
            <person name="Crameri A."/>
            <person name="Steiner A.R."/>
            <person name="Henningsen R."/>
            <person name="Gill A."/>
            <person name="Pons J."/>
            <person name="Shelton D.L."/>
            <person name="Rajpal A."/>
            <person name="Strop P."/>
        </authorList>
    </citation>
    <scope>FUNCTION</scope>
    <scope>MUTAGENESIS OF TRP-5; LYS-12; LYS-18; 19-ASN--THR-21; ARG-24; 25-ARG-ASP-26 AND 31-TYR-ASP-32</scope>
    <scope>X-RAY CRYSTALLOGRAPHY (1.75 ANGSTROMS) OF MUTANT 2670 IN COMPLEX WITH AN ANTIBODY FRAGMENT</scope>
    <scope>PHARMACEUTICAL</scope>
</reference>
<reference key="3">
    <citation type="journal article" date="2017" name="PLoS ONE">
        <title>Discovery and mode of action of a novel analgesic beta-toxin from the African spider Ceratogyrus darlingi.</title>
        <authorList>
            <person name="Sousa S.R."/>
            <person name="Wingerd J.S."/>
            <person name="Brust A."/>
            <person name="Bladen C."/>
            <person name="Ragnarsson L."/>
            <person name="Herzig V."/>
            <person name="Deuis J.R."/>
            <person name="Dutertre S."/>
            <person name="Vetter I."/>
            <person name="Zamponi G.W."/>
            <person name="King G.F."/>
            <person name="Alewood P.F."/>
            <person name="Lewis R.J."/>
        </authorList>
    </citation>
    <scope>FUNCTION</scope>
</reference>
<reference key="4">
    <citation type="journal article" date="2018" name="J. Biol. Chem.">
        <title>Gating modifier toxins isolated from spider venom: modulation of voltage-gated sodium channels and the role of lipid membranes.</title>
        <authorList>
            <person name="Agwa A.J."/>
            <person name="Peigneur S."/>
            <person name="Chow C.Y."/>
            <person name="Lawrence N."/>
            <person name="Craik D.J."/>
            <person name="Tytgat J."/>
            <person name="King G.F."/>
            <person name="Henriques S.T."/>
            <person name="Schroeder C.I."/>
        </authorList>
    </citation>
    <scope>FUNCTION</scope>
    <scope>SYNTHESIS</scope>
</reference>
<protein>
    <recommendedName>
        <fullName evidence="8">Beta-theraphotoxin-Cm1a</fullName>
        <shortName evidence="8">Beta-TRTX-Cm1a</shortName>
    </recommendedName>
    <alternativeName>
        <fullName evidence="7">CcoTx-I</fullName>
    </alternativeName>
    <alternativeName>
        <fullName evidence="5 6">Ceratotoxin-1</fullName>
        <shortName evidence="5 6">CcoTx1</shortName>
    </alternativeName>
</protein>
<accession>P84507</accession>
<dbReference type="PDB" id="5EPM">
    <property type="method" value="X-ray"/>
    <property type="resolution" value="1.75 A"/>
    <property type="chains" value="C/D=1-33"/>
</dbReference>
<dbReference type="PDB" id="6BR0">
    <property type="method" value="NMR"/>
    <property type="chains" value="A=1-33"/>
</dbReference>
<dbReference type="PDBsum" id="5EPM"/>
<dbReference type="PDBsum" id="6BR0"/>
<dbReference type="BMRB" id="P84507"/>
<dbReference type="SMR" id="P84507"/>
<dbReference type="ABCD" id="P84507">
    <property type="antibodies" value="1 sequenced antibody"/>
</dbReference>
<dbReference type="ArachnoServer" id="AS000221">
    <property type="toxin name" value="beta-theraphotoxin-Cm1a"/>
</dbReference>
<dbReference type="EvolutionaryTrace" id="P84507"/>
<dbReference type="GO" id="GO:0005615">
    <property type="term" value="C:extracellular space"/>
    <property type="evidence" value="ECO:0000314"/>
    <property type="project" value="UniProtKB"/>
</dbReference>
<dbReference type="GO" id="GO:0005246">
    <property type="term" value="F:calcium channel regulator activity"/>
    <property type="evidence" value="ECO:0007669"/>
    <property type="project" value="UniProtKB-KW"/>
</dbReference>
<dbReference type="GO" id="GO:0019871">
    <property type="term" value="F:sodium channel inhibitor activity"/>
    <property type="evidence" value="ECO:0000314"/>
    <property type="project" value="UniProtKB"/>
</dbReference>
<dbReference type="GO" id="GO:0090729">
    <property type="term" value="F:toxin activity"/>
    <property type="evidence" value="ECO:0000314"/>
    <property type="project" value="UniProtKB"/>
</dbReference>
<dbReference type="GO" id="GO:0044493">
    <property type="term" value="P:envenomation resulting in negative regulation of voltage-gated sodium channel activity in another organism"/>
    <property type="evidence" value="ECO:0000314"/>
    <property type="project" value="UniProtKB"/>
</dbReference>
<dbReference type="InterPro" id="IPR011696">
    <property type="entry name" value="Huwentoxin-1"/>
</dbReference>
<dbReference type="InterPro" id="IPR013140">
    <property type="entry name" value="Huwentoxin_CS1"/>
</dbReference>
<dbReference type="Pfam" id="PF07740">
    <property type="entry name" value="Toxin_12"/>
    <property type="match status" value="1"/>
</dbReference>
<dbReference type="SUPFAM" id="SSF57059">
    <property type="entry name" value="omega toxin-like"/>
    <property type="match status" value="1"/>
</dbReference>
<dbReference type="PROSITE" id="PS60021">
    <property type="entry name" value="HWTX_1"/>
    <property type="match status" value="1"/>
</dbReference>
<keyword id="KW-0002">3D-structure</keyword>
<keyword id="KW-0027">Amidation</keyword>
<keyword id="KW-0108">Calcium channel impairing toxin</keyword>
<keyword id="KW-0903">Direct protein sequencing</keyword>
<keyword id="KW-1015">Disulfide bond</keyword>
<keyword id="KW-0872">Ion channel impairing toxin</keyword>
<keyword id="KW-0960">Knottin</keyword>
<keyword id="KW-0528">Neurotoxin</keyword>
<keyword id="KW-0582">Pharmaceutical</keyword>
<keyword id="KW-0964">Secreted</keyword>
<keyword id="KW-0800">Toxin</keyword>
<keyword id="KW-1218">Voltage-gated calcium channel impairing toxin</keyword>
<keyword id="KW-0738">Voltage-gated sodium channel impairing toxin</keyword>
<sequence length="33" mass="4052">DCLGWFKSCDPKNDKCCKNYTCSRRDRWCKYDL</sequence>
<name>TX1_CERMR</name>
<organism>
    <name type="scientific">Ceratogyrus marshalli</name>
    <name type="common">Straighthorned baboon tarantula</name>
    <name type="synonym">Ceratogyrus cornuatus</name>
    <dbReference type="NCBI Taxonomy" id="316287"/>
    <lineage>
        <taxon>Eukaryota</taxon>
        <taxon>Metazoa</taxon>
        <taxon>Ecdysozoa</taxon>
        <taxon>Arthropoda</taxon>
        <taxon>Chelicerata</taxon>
        <taxon>Arachnida</taxon>
        <taxon>Araneae</taxon>
        <taxon>Mygalomorphae</taxon>
        <taxon>Theraphosidae</taxon>
        <taxon>Ceratogyrus</taxon>
    </lineage>
</organism>
<feature type="peptide" id="PRO_0000045000" description="Beta-theraphotoxin-Cm1a" evidence="1">
    <location>
        <begin position="1"/>
        <end position="33"/>
    </location>
</feature>
<feature type="modified residue" description="Leucine amide" evidence="1">
    <location>
        <position position="33"/>
    </location>
</feature>
<feature type="disulfide bond" evidence="10">
    <location>
        <begin position="2"/>
        <end position="17"/>
    </location>
</feature>
<feature type="disulfide bond" evidence="10">
    <location>
        <begin position="9"/>
        <end position="22"/>
    </location>
</feature>
<feature type="disulfide bond" evidence="10">
    <location>
        <begin position="16"/>
        <end position="29"/>
    </location>
</feature>
<feature type="mutagenesis site" description="Important increase in potency toward Nav1.7/SCN9A, and low potency on Nav1.4/SCN4A and Nav1.5/SCN5A; synthetic variant D1Z/M5I/K18Y/R24Ka and synthetic variant D1Z/M5I/R27Na." evidence="2">
    <original>W</original>
    <variation>I</variation>
    <location>
        <position position="5"/>
    </location>
</feature>
<feature type="mutagenesis site" description="Important increase in potency toward Nav1.7/SCN9A, and low potency on Nav1.4/SCN4A and Nav1.5/SCN5A; synthetic variant D1Z/M5I/K18Y/R24Ka and synthetic variant D1Z/M5I/R27Na." evidence="2">
    <original>K</original>
    <variation>E</variation>
    <location>
        <position position="12"/>
    </location>
</feature>
<feature type="mutagenesis site" description="Important increase in potency toward Nav1.7/SCN9A, and low potency on Nav1.4/SCN4A and Nav1.5/SCN5A; synthetic variant D1Z/M5I/K18Y/R24Ka." evidence="2">
    <original>K</original>
    <variation>Y</variation>
    <location>
        <position position="18"/>
    </location>
</feature>
<feature type="mutagenesis site" description="Important increase in potency toward Nav1.7/SCN9A, and low potency on Nav1.4/SCN4A and Nav1.5/SCN5A; synthetic variant D1Z/M5I/K18Y/R24Ka and synthetic variant D1Z/M5I/R27Na." evidence="2">
    <original>NYT</original>
    <variation>RLV</variation>
    <location>
        <begin position="19"/>
        <end position="21"/>
    </location>
</feature>
<feature type="mutagenesis site" description="Important increase in potency toward Nav1.7/SCN9A, and low potency on Nav1.4/SCN4A and Nav1.5/SCN5A; synthetic variant D1Z/M5I/K18Y/R24Ka." evidence="2">
    <original>R</original>
    <variation>K</variation>
    <location>
        <position position="24"/>
    </location>
</feature>
<feature type="mutagenesis site" description="Important increase in potency toward Nav1.7/SCN9A, and low potency on Nav1.4/SCN4A and Nav1.5/SCN5A; synthetic variant D1Z/M5I/K18Y/R24Ka and synthetic variant D1Z/M5I/R27Na." evidence="2">
    <original>RD</original>
    <variation>SH</variation>
    <location>
        <begin position="25"/>
        <end position="26"/>
    </location>
</feature>
<feature type="mutagenesis site" description="Important increase in potency toward Nav1.7/SCN9A, and low potency on Nav1.4/SCN4A and Nav1.5/SCN5A; synthetic variant D1Z/M5I/R27Na." evidence="2">
    <original>R</original>
    <variation>N</variation>
    <location>
        <position position="27"/>
    </location>
</feature>
<feature type="mutagenesis site" description="Important increase in potency toward Nav1.7/SCN9A, and low potency on Nav1.4/SCN4A and Nav1.5/SCN5A; synthetic variant D1Z/M5I/K18Y/R24Ka and synthetic variant D1Z/M5I/R27Na." evidence="2">
    <original>YD</original>
    <variation>WK</variation>
    <location>
        <begin position="31"/>
        <end position="32"/>
    </location>
</feature>
<feature type="helix" evidence="11">
    <location>
        <begin position="11"/>
        <end position="13"/>
    </location>
</feature>
<feature type="strand" evidence="11">
    <location>
        <begin position="20"/>
        <end position="22"/>
    </location>
</feature>
<feature type="turn" evidence="11">
    <location>
        <begin position="24"/>
        <end position="26"/>
    </location>
</feature>
<feature type="strand" evidence="11">
    <location>
        <begin position="28"/>
        <end position="31"/>
    </location>
</feature>